<reference key="1">
    <citation type="journal article" date="1984" name="J. Biol. Chem.">
        <title>Nucleotide sequence and expression of the Escherichia coli dapB gene.</title>
        <authorList>
            <person name="Bouvier J."/>
            <person name="Richaud C."/>
            <person name="Richaud F."/>
            <person name="Patte J.-C."/>
            <person name="Stragier P."/>
        </authorList>
    </citation>
    <scope>NUCLEOTIDE SEQUENCE [GENOMIC DNA]</scope>
</reference>
<reference key="2">
    <citation type="journal article" date="1992" name="Nucleic Acids Res.">
        <title>Systematic sequencing of the Escherichia coli genome: analysis of the 0-2.4 min region.</title>
        <authorList>
            <person name="Yura T."/>
            <person name="Mori H."/>
            <person name="Nagai H."/>
            <person name="Nagata T."/>
            <person name="Ishihama A."/>
            <person name="Fujita N."/>
            <person name="Isono K."/>
            <person name="Mizobuchi K."/>
            <person name="Nakata A."/>
        </authorList>
    </citation>
    <scope>NUCLEOTIDE SEQUENCE [LARGE SCALE GENOMIC DNA]</scope>
    <source>
        <strain>K12</strain>
    </source>
</reference>
<reference key="3">
    <citation type="journal article" date="1997" name="Science">
        <title>The complete genome sequence of Escherichia coli K-12.</title>
        <authorList>
            <person name="Blattner F.R."/>
            <person name="Plunkett G. III"/>
            <person name="Bloch C.A."/>
            <person name="Perna N.T."/>
            <person name="Burland V."/>
            <person name="Riley M."/>
            <person name="Collado-Vides J."/>
            <person name="Glasner J.D."/>
            <person name="Rode C.K."/>
            <person name="Mayhew G.F."/>
            <person name="Gregor J."/>
            <person name="Davis N.W."/>
            <person name="Kirkpatrick H.A."/>
            <person name="Goeden M.A."/>
            <person name="Rose D.J."/>
            <person name="Mau B."/>
            <person name="Shao Y."/>
        </authorList>
    </citation>
    <scope>NUCLEOTIDE SEQUENCE [LARGE SCALE GENOMIC DNA]</scope>
    <source>
        <strain>K12 / MG1655 / ATCC 47076</strain>
    </source>
</reference>
<reference key="4">
    <citation type="journal article" date="2006" name="Mol. Syst. Biol.">
        <title>Highly accurate genome sequences of Escherichia coli K-12 strains MG1655 and W3110.</title>
        <authorList>
            <person name="Hayashi K."/>
            <person name="Morooka N."/>
            <person name="Yamamoto Y."/>
            <person name="Fujita K."/>
            <person name="Isono K."/>
            <person name="Choi S."/>
            <person name="Ohtsubo E."/>
            <person name="Baba T."/>
            <person name="Wanner B.L."/>
            <person name="Mori H."/>
            <person name="Horiuchi T."/>
        </authorList>
    </citation>
    <scope>NUCLEOTIDE SEQUENCE [LARGE SCALE GENOMIC DNA]</scope>
    <source>
        <strain>K12 / W3110 / ATCC 27325 / DSM 5911</strain>
    </source>
</reference>
<reference key="5">
    <citation type="journal article" date="1984" name="Proc. Natl. Acad. Sci. U.S.A.">
        <title>Multiple regulatory signals in the control region of the Escherichia coli carAB operon.</title>
        <authorList>
            <person name="Bouvier J."/>
            <person name="Patte J.-C."/>
            <person name="Stragier P."/>
        </authorList>
    </citation>
    <scope>NUCLEOTIDE SEQUENCE [GENOMIC DNA] OF 269-273</scope>
</reference>
<reference key="6">
    <citation type="journal article" date="1995" name="Biochemistry">
        <title>Expression, purification, and characterization of Escherichia coli dihydrodipicolinate reductase.</title>
        <authorList>
            <person name="Reddy S.G."/>
            <person name="Sacchettini J.C."/>
            <person name="Blanchard J.S."/>
        </authorList>
    </citation>
    <scope>PROTEIN SEQUENCE OF 1-18</scope>
    <scope>FUNCTION</scope>
    <scope>KINETIC PARAMETERS</scope>
    <scope>SUBSTRATE SPECIFICITY</scope>
    <scope>SUBUNIT</scope>
    <scope>MASS SPECTROMETRY</scope>
    <source>
        <strain>K12</strain>
    </source>
</reference>
<reference key="7">
    <citation type="journal article" date="2008" name="J. Bacteriol.">
        <title>Lysine represses transcription of the Escherichia coli dapB gene by preventing its activation by the ArgP activator.</title>
        <authorList>
            <person name="Bouvier J."/>
            <person name="Stragier P."/>
            <person name="Morales V."/>
            <person name="Remy E."/>
            <person name="Gutierrez C."/>
        </authorList>
    </citation>
    <scope>INDUCTION</scope>
    <source>
        <strain>K12 / MG1655 / ATCC 47076</strain>
    </source>
</reference>
<reference key="8">
    <citation type="journal article" date="2010" name="J. Med. Chem.">
        <title>NMR studies uncover alternate substrates for dihydrodipicolinate synthase and suggest that dihydrodipicolinate reductase is also a dehydratase.</title>
        <authorList>
            <person name="Devenish S.R."/>
            <person name="Blunt J.W."/>
            <person name="Gerrard J.A."/>
        </authorList>
    </citation>
    <scope>FUNCTION</scope>
    <scope>CATALYTIC ACTIVITY</scope>
    <scope>IDENTIFICATION OF HTPA AS REACTION SUBSTRTATE</scope>
    <scope>ACTIVE SITE</scope>
</reference>
<reference evidence="10" key="9">
    <citation type="journal article" date="1995" name="Biochemistry">
        <title>Three-dimensional structure of Escherichia coli dihydrodipicolinate reductase.</title>
        <authorList>
            <person name="Scapin G."/>
            <person name="Blanchard J.S."/>
            <person name="Sacchettini J.C."/>
        </authorList>
    </citation>
    <scope>X-RAY CRYSTALLOGRAPHY (2.2 ANGSTROMS) IN COMPLEX WITH NADPH</scope>
    <source>
        <strain>K12</strain>
    </source>
</reference>
<reference evidence="11 12 13" key="10">
    <citation type="journal article" date="1996" name="Biochemistry">
        <title>Interaction of pyridine nucleotide substrates with Escherichia coli dihydrodipicolinate reductase: thermodynamic and structural analysis of binary complexes.</title>
        <authorList>
            <person name="Reddy S.G."/>
            <person name="Scapin G."/>
            <person name="Blanchard J.S."/>
        </authorList>
    </citation>
    <scope>X-RAY CRYSTALLOGRAPHY (2.2 ANGSTROMS) IN COMPLEX WITH NAD OR NUCLEOTIDE SUBSTRATE ANALOGS</scope>
    <source>
        <strain>K12</strain>
    </source>
</reference>
<reference evidence="9" key="11">
    <citation type="journal article" date="1997" name="Biochemistry">
        <title>Three-dimensional structure of Escherichia coli dihydrodipicolinate reductase in complex with NADH and the inhibitor 2,6-pyridinedicarboxylate.</title>
        <authorList>
            <person name="Scapin G."/>
            <person name="Reddy S.G."/>
            <person name="Zheng R."/>
            <person name="Blanchard J.S."/>
        </authorList>
    </citation>
    <scope>X-RAY CRYSTALLOGRAPHY (2.6 ANGSTROMS) IN COMPLEX WITH NAD AND A SUBSTRATE ANALOG INHIBITOR</scope>
    <scope>ACTIVITY REGULATION</scope>
    <scope>KINETIC PARAMETERS</scope>
    <scope>REACTION MECHANISM</scope>
    <scope>ACTIVE SITE</scope>
    <scope>SITE</scope>
    <scope>MUTAGENESIS OF HIS-159 AND LYS-163</scope>
    <source>
        <strain>K12</strain>
    </source>
</reference>
<proteinExistence type="evidence at protein level"/>
<accession>P04036</accession>
<name>DAPB_ECOLI</name>
<organism>
    <name type="scientific">Escherichia coli (strain K12)</name>
    <dbReference type="NCBI Taxonomy" id="83333"/>
    <lineage>
        <taxon>Bacteria</taxon>
        <taxon>Pseudomonadati</taxon>
        <taxon>Pseudomonadota</taxon>
        <taxon>Gammaproteobacteria</taxon>
        <taxon>Enterobacterales</taxon>
        <taxon>Enterobacteriaceae</taxon>
        <taxon>Escherichia</taxon>
    </lineage>
</organism>
<dbReference type="EC" id="1.17.1.8" evidence="1"/>
<dbReference type="EMBL" id="M10611">
    <property type="protein sequence ID" value="AAA23666.1"/>
    <property type="molecule type" value="Genomic_DNA"/>
</dbReference>
<dbReference type="EMBL" id="U00096">
    <property type="protein sequence ID" value="AAC73142.1"/>
    <property type="molecule type" value="Genomic_DNA"/>
</dbReference>
<dbReference type="EMBL" id="AP009048">
    <property type="protein sequence ID" value="BAB96600.1"/>
    <property type="molecule type" value="Genomic_DNA"/>
</dbReference>
<dbReference type="EMBL" id="J01597">
    <property type="status" value="NOT_ANNOTATED_CDS"/>
    <property type="molecule type" value="Genomic_DNA"/>
</dbReference>
<dbReference type="PIR" id="A00375">
    <property type="entry name" value="RDECPD"/>
</dbReference>
<dbReference type="RefSeq" id="NP_414572.1">
    <property type="nucleotide sequence ID" value="NC_000913.3"/>
</dbReference>
<dbReference type="RefSeq" id="WP_000543604.1">
    <property type="nucleotide sequence ID" value="NZ_SSUR01000014.1"/>
</dbReference>
<dbReference type="PDB" id="1ARZ">
    <property type="method" value="X-ray"/>
    <property type="resolution" value="2.60 A"/>
    <property type="chains" value="A/B/C/D=1-273"/>
</dbReference>
<dbReference type="PDB" id="1DIH">
    <property type="method" value="X-ray"/>
    <property type="resolution" value="2.20 A"/>
    <property type="chains" value="A=1-273"/>
</dbReference>
<dbReference type="PDB" id="1DRU">
    <property type="method" value="X-ray"/>
    <property type="resolution" value="2.20 A"/>
    <property type="chains" value="A=1-273"/>
</dbReference>
<dbReference type="PDB" id="1DRV">
    <property type="method" value="X-ray"/>
    <property type="resolution" value="2.20 A"/>
    <property type="chains" value="A=1-273"/>
</dbReference>
<dbReference type="PDB" id="1DRW">
    <property type="method" value="X-ray"/>
    <property type="resolution" value="2.20 A"/>
    <property type="chains" value="A=1-273"/>
</dbReference>
<dbReference type="PDBsum" id="1ARZ"/>
<dbReference type="PDBsum" id="1DIH"/>
<dbReference type="PDBsum" id="1DRU"/>
<dbReference type="PDBsum" id="1DRV"/>
<dbReference type="PDBsum" id="1DRW"/>
<dbReference type="SMR" id="P04036"/>
<dbReference type="BioGRID" id="4261490">
    <property type="interactions" value="17"/>
</dbReference>
<dbReference type="DIP" id="DIP-9399N"/>
<dbReference type="FunCoup" id="P04036">
    <property type="interactions" value="682"/>
</dbReference>
<dbReference type="IntAct" id="P04036">
    <property type="interactions" value="1"/>
</dbReference>
<dbReference type="STRING" id="511145.b0031"/>
<dbReference type="BindingDB" id="P04036"/>
<dbReference type="ChEMBL" id="CHEMBL3309005"/>
<dbReference type="DrugBank" id="DB03363">
    <property type="generic name" value="3-Acetylpyridine Adenine Dinucleotide"/>
</dbReference>
<dbReference type="DrugBank" id="DB04267">
    <property type="generic name" value="Dipicolinic acid"/>
</dbReference>
<dbReference type="jPOST" id="P04036"/>
<dbReference type="PaxDb" id="511145-b0031"/>
<dbReference type="EnsemblBacteria" id="AAC73142">
    <property type="protein sequence ID" value="AAC73142"/>
    <property type="gene ID" value="b0031"/>
</dbReference>
<dbReference type="GeneID" id="944762"/>
<dbReference type="KEGG" id="ecj:JW0029"/>
<dbReference type="KEGG" id="eco:b0031"/>
<dbReference type="KEGG" id="ecoc:C3026_00150"/>
<dbReference type="PATRIC" id="fig|1411691.4.peg.2254"/>
<dbReference type="EchoBASE" id="EB0202"/>
<dbReference type="eggNOG" id="COG0289">
    <property type="taxonomic scope" value="Bacteria"/>
</dbReference>
<dbReference type="HOGENOM" id="CLU_047479_2_1_6"/>
<dbReference type="InParanoid" id="P04036"/>
<dbReference type="OMA" id="HHPNKAD"/>
<dbReference type="OrthoDB" id="9790352at2"/>
<dbReference type="PhylomeDB" id="P04036"/>
<dbReference type="BioCyc" id="EcoCyc:DIHYDROPICRED-MONOMER"/>
<dbReference type="BioCyc" id="MetaCyc:DIHYDROPICRED-MONOMER"/>
<dbReference type="BRENDA" id="1.17.1.8">
    <property type="organism ID" value="2026"/>
</dbReference>
<dbReference type="SABIO-RK" id="P04036"/>
<dbReference type="UniPathway" id="UPA00034">
    <property type="reaction ID" value="UER00018"/>
</dbReference>
<dbReference type="EvolutionaryTrace" id="P04036"/>
<dbReference type="PRO" id="PR:P04036"/>
<dbReference type="Proteomes" id="UP000000625">
    <property type="component" value="Chromosome"/>
</dbReference>
<dbReference type="GO" id="GO:0005829">
    <property type="term" value="C:cytosol"/>
    <property type="evidence" value="ECO:0000314"/>
    <property type="project" value="EcoCyc"/>
</dbReference>
<dbReference type="GO" id="GO:0008839">
    <property type="term" value="F:4-hydroxy-tetrahydrodipicolinate reductase"/>
    <property type="evidence" value="ECO:0000314"/>
    <property type="project" value="EcoCyc"/>
</dbReference>
<dbReference type="GO" id="GO:0042802">
    <property type="term" value="F:identical protein binding"/>
    <property type="evidence" value="ECO:0000314"/>
    <property type="project" value="EcoCyc"/>
</dbReference>
<dbReference type="GO" id="GO:0051287">
    <property type="term" value="F:NAD binding"/>
    <property type="evidence" value="ECO:0007669"/>
    <property type="project" value="UniProtKB-UniRule"/>
</dbReference>
<dbReference type="GO" id="GO:0050661">
    <property type="term" value="F:NADP binding"/>
    <property type="evidence" value="ECO:0007669"/>
    <property type="project" value="UniProtKB-UniRule"/>
</dbReference>
<dbReference type="GO" id="GO:0016726">
    <property type="term" value="F:oxidoreductase activity, acting on CH or CH2 groups, NAD or NADP as acceptor"/>
    <property type="evidence" value="ECO:0007669"/>
    <property type="project" value="UniProtKB-UniRule"/>
</dbReference>
<dbReference type="GO" id="GO:0008652">
    <property type="term" value="P:amino acid biosynthetic process"/>
    <property type="evidence" value="ECO:0000314"/>
    <property type="project" value="EcoliWiki"/>
</dbReference>
<dbReference type="GO" id="GO:0019877">
    <property type="term" value="P:diaminopimelate biosynthetic process"/>
    <property type="evidence" value="ECO:0000314"/>
    <property type="project" value="EcoliWiki"/>
</dbReference>
<dbReference type="GO" id="GO:0009089">
    <property type="term" value="P:lysine biosynthetic process via diaminopimelate"/>
    <property type="evidence" value="ECO:0007669"/>
    <property type="project" value="UniProtKB-UniRule"/>
</dbReference>
<dbReference type="CDD" id="cd02274">
    <property type="entry name" value="DHDPR_N"/>
    <property type="match status" value="1"/>
</dbReference>
<dbReference type="FunFam" id="3.30.360.10:FF:000004">
    <property type="entry name" value="4-hydroxy-tetrahydrodipicolinate reductase"/>
    <property type="match status" value="1"/>
</dbReference>
<dbReference type="FunFam" id="3.40.50.720:FF:000048">
    <property type="entry name" value="4-hydroxy-tetrahydrodipicolinate reductase"/>
    <property type="match status" value="1"/>
</dbReference>
<dbReference type="Gene3D" id="3.30.360.10">
    <property type="entry name" value="Dihydrodipicolinate Reductase, domain 2"/>
    <property type="match status" value="1"/>
</dbReference>
<dbReference type="Gene3D" id="3.40.50.720">
    <property type="entry name" value="NAD(P)-binding Rossmann-like Domain"/>
    <property type="match status" value="1"/>
</dbReference>
<dbReference type="HAMAP" id="MF_00102">
    <property type="entry name" value="DapB"/>
    <property type="match status" value="1"/>
</dbReference>
<dbReference type="InterPro" id="IPR022663">
    <property type="entry name" value="DapB_C"/>
</dbReference>
<dbReference type="InterPro" id="IPR000846">
    <property type="entry name" value="DapB_N"/>
</dbReference>
<dbReference type="InterPro" id="IPR022664">
    <property type="entry name" value="DapB_N_CS"/>
</dbReference>
<dbReference type="InterPro" id="IPR023940">
    <property type="entry name" value="DHDPR_bac"/>
</dbReference>
<dbReference type="InterPro" id="IPR036291">
    <property type="entry name" value="NAD(P)-bd_dom_sf"/>
</dbReference>
<dbReference type="NCBIfam" id="TIGR00036">
    <property type="entry name" value="dapB"/>
    <property type="match status" value="1"/>
</dbReference>
<dbReference type="PANTHER" id="PTHR20836:SF0">
    <property type="entry name" value="4-HYDROXY-TETRAHYDRODIPICOLINATE REDUCTASE 1, CHLOROPLASTIC-RELATED"/>
    <property type="match status" value="1"/>
</dbReference>
<dbReference type="PANTHER" id="PTHR20836">
    <property type="entry name" value="DIHYDRODIPICOLINATE REDUCTASE"/>
    <property type="match status" value="1"/>
</dbReference>
<dbReference type="Pfam" id="PF05173">
    <property type="entry name" value="DapB_C"/>
    <property type="match status" value="1"/>
</dbReference>
<dbReference type="Pfam" id="PF01113">
    <property type="entry name" value="DapB_N"/>
    <property type="match status" value="1"/>
</dbReference>
<dbReference type="PIRSF" id="PIRSF000161">
    <property type="entry name" value="DHPR"/>
    <property type="match status" value="1"/>
</dbReference>
<dbReference type="SUPFAM" id="SSF55347">
    <property type="entry name" value="Glyceraldehyde-3-phosphate dehydrogenase-like, C-terminal domain"/>
    <property type="match status" value="1"/>
</dbReference>
<dbReference type="SUPFAM" id="SSF51735">
    <property type="entry name" value="NAD(P)-binding Rossmann-fold domains"/>
    <property type="match status" value="1"/>
</dbReference>
<dbReference type="PROSITE" id="PS01298">
    <property type="entry name" value="DAPB"/>
    <property type="match status" value="1"/>
</dbReference>
<comment type="function">
    <text evidence="1 3 4">Catalyzes the conversion of 4-hydroxy-tetrahydrodipicolinate (HTPA) to tetrahydrodipicolinate. Can use both NADH and NADPH as a reductant, with NADH being twice as effective as NADPH.</text>
</comment>
<comment type="catalytic activity">
    <reaction evidence="1 3">
        <text>(S)-2,3,4,5-tetrahydrodipicolinate + NAD(+) + H2O = (2S,4S)-4-hydroxy-2,3,4,5-tetrahydrodipicolinate + NADH + H(+)</text>
        <dbReference type="Rhea" id="RHEA:35323"/>
        <dbReference type="ChEBI" id="CHEBI:15377"/>
        <dbReference type="ChEBI" id="CHEBI:15378"/>
        <dbReference type="ChEBI" id="CHEBI:16845"/>
        <dbReference type="ChEBI" id="CHEBI:57540"/>
        <dbReference type="ChEBI" id="CHEBI:57945"/>
        <dbReference type="ChEBI" id="CHEBI:67139"/>
        <dbReference type="EC" id="1.17.1.8"/>
    </reaction>
</comment>
<comment type="catalytic activity">
    <reaction evidence="1 3">
        <text>(S)-2,3,4,5-tetrahydrodipicolinate + NADP(+) + H2O = (2S,4S)-4-hydroxy-2,3,4,5-tetrahydrodipicolinate + NADPH + H(+)</text>
        <dbReference type="Rhea" id="RHEA:35331"/>
        <dbReference type="ChEBI" id="CHEBI:15377"/>
        <dbReference type="ChEBI" id="CHEBI:15378"/>
        <dbReference type="ChEBI" id="CHEBI:16845"/>
        <dbReference type="ChEBI" id="CHEBI:57783"/>
        <dbReference type="ChEBI" id="CHEBI:58349"/>
        <dbReference type="ChEBI" id="CHEBI:67139"/>
        <dbReference type="EC" id="1.17.1.8"/>
    </reaction>
</comment>
<comment type="activity regulation">
    <text evidence="7">Is inhibited by 2,6-pyridine dicarboxylate (2,6-PDC or picolinate).</text>
</comment>
<comment type="biophysicochemical properties">
    <kinetics>
        <KM evidence="4 7">1.6 uM for NADH</KM>
        <KM evidence="4 7">8 uM for NADPH</KM>
    </kinetics>
</comment>
<comment type="pathway">
    <text evidence="1">Amino-acid biosynthesis; L-lysine biosynthesis via DAP pathway; (S)-tetrahydrodipicolinate from L-aspartate: step 4/4.</text>
</comment>
<comment type="subunit">
    <text evidence="1 4 5 6 7">Homotetramer.</text>
</comment>
<comment type="subcellular location">
    <subcellularLocation>
        <location>Cytoplasm</location>
    </subcellularLocation>
</comment>
<comment type="induction">
    <text evidence="2">Expression of dapB is up-regulated by ArgP and is repressed by lysine that prevents the binding of the ArgP activator. Thus, ArgP contributes to enhanced transcription of dapB when lysine becomes limiting.</text>
</comment>
<comment type="mass spectrometry" mass="28758.0" error="8.0" method="Electrospray" evidence="4"/>
<comment type="similarity">
    <text evidence="1">Belongs to the DapB family.</text>
</comment>
<comment type="caution">
    <text evidence="8">Was originally thought to be a dihydrodipicolinate reductase (DHDPR), catalyzing the conversion of dihydrodipicolinate to tetrahydrodipicolinate. However, it was shown that the substrate of the enzymatic reaction is not dihydrodipicolinate (DHDP) but in fact (2S,4S)-4-hydroxy-2,3,4,5-tetrahydrodipicolinic acid (HTPA), the product released by the DapA-catalyzed reaction (PubMed:20503968).</text>
</comment>
<protein>
    <recommendedName>
        <fullName evidence="1">4-hydroxy-tetrahydrodipicolinate reductase</fullName>
        <shortName evidence="1">HTPA reductase</shortName>
        <ecNumber evidence="1">1.17.1.8</ecNumber>
    </recommendedName>
</protein>
<sequence length="273" mass="28757">MHDANIRVAIAGAGGRMGRQLIQAALALEGVQLGAALEREGSSLLGSDAGELAGAGKTGVTVQSSLDAVKDDFDVFIDFTRPEGTLNHLAFCRQHGKGMVIGTTGFDEAGKQAIRDAAADIAIVFAANFSVGVNVMLKLLEKAAKVMGDYTDIEIIEAHHRHKVDAPSGTALAMGEAIAHALDKDLKDCAVYSREGHTGERVPGTIGFATVRAGDIVGEHTAMFADIGERLEITHKASSRMTFANGAVRSALWLSGKESGLFDMRDVLDLNNL</sequence>
<gene>
    <name evidence="1" type="primary">dapB</name>
    <name type="ordered locus">b0031</name>
    <name type="ordered locus">JW0029</name>
</gene>
<evidence type="ECO:0000255" key="1">
    <source>
        <dbReference type="HAMAP-Rule" id="MF_00102"/>
    </source>
</evidence>
<evidence type="ECO:0000269" key="2">
    <source>
    </source>
</evidence>
<evidence type="ECO:0000269" key="3">
    <source>
    </source>
</evidence>
<evidence type="ECO:0000269" key="4">
    <source>
    </source>
</evidence>
<evidence type="ECO:0000269" key="5">
    <source>
    </source>
</evidence>
<evidence type="ECO:0000269" key="6">
    <source>
    </source>
</evidence>
<evidence type="ECO:0000269" key="7">
    <source>
    </source>
</evidence>
<evidence type="ECO:0000305" key="8">
    <source>
    </source>
</evidence>
<evidence type="ECO:0007744" key="9">
    <source>
        <dbReference type="PDB" id="1ARZ"/>
    </source>
</evidence>
<evidence type="ECO:0007744" key="10">
    <source>
        <dbReference type="PDB" id="1DIH"/>
    </source>
</evidence>
<evidence type="ECO:0007744" key="11">
    <source>
        <dbReference type="PDB" id="1DRU"/>
    </source>
</evidence>
<evidence type="ECO:0007744" key="12">
    <source>
        <dbReference type="PDB" id="1DRV"/>
    </source>
</evidence>
<evidence type="ECO:0007744" key="13">
    <source>
        <dbReference type="PDB" id="1DRW"/>
    </source>
</evidence>
<evidence type="ECO:0007829" key="14">
    <source>
        <dbReference type="PDB" id="1DIH"/>
    </source>
</evidence>
<evidence type="ECO:0007829" key="15">
    <source>
        <dbReference type="PDB" id="1DRU"/>
    </source>
</evidence>
<keyword id="KW-0002">3D-structure</keyword>
<keyword id="KW-0028">Amino-acid biosynthesis</keyword>
<keyword id="KW-0963">Cytoplasm</keyword>
<keyword id="KW-0220">Diaminopimelate biosynthesis</keyword>
<keyword id="KW-0903">Direct protein sequencing</keyword>
<keyword id="KW-0457">Lysine biosynthesis</keyword>
<keyword id="KW-0520">NAD</keyword>
<keyword id="KW-0521">NADP</keyword>
<keyword id="KW-0560">Oxidoreductase</keyword>
<keyword id="KW-1185">Reference proteome</keyword>
<feature type="chain" id="PRO_0000141437" description="4-hydroxy-tetrahydrodipicolinate reductase">
    <location>
        <begin position="1"/>
        <end position="273"/>
    </location>
</feature>
<feature type="active site" description="Proton donor/acceptor">
    <location>
        <position position="159"/>
    </location>
</feature>
<feature type="active site" description="Proton donor">
    <location>
        <position position="163"/>
    </location>
</feature>
<feature type="binding site" evidence="5 10">
    <location>
        <position position="12"/>
    </location>
    <ligand>
        <name>NADP(+)</name>
        <dbReference type="ChEBI" id="CHEBI:58349"/>
    </ligand>
</feature>
<feature type="binding site" evidence="6 7 9 11">
    <location>
        <begin position="15"/>
        <end position="17"/>
    </location>
    <ligand>
        <name>NAD(+)</name>
        <dbReference type="ChEBI" id="CHEBI:57540"/>
    </ligand>
</feature>
<feature type="binding site" evidence="5 10">
    <location>
        <begin position="16"/>
        <end position="17"/>
    </location>
    <ligand>
        <name>NADP(+)</name>
        <dbReference type="ChEBI" id="CHEBI:58349"/>
    </ligand>
</feature>
<feature type="binding site" evidence="6 7 9 11">
    <location>
        <position position="38"/>
    </location>
    <ligand>
        <name>NAD(+)</name>
        <dbReference type="ChEBI" id="CHEBI:57540"/>
    </ligand>
</feature>
<feature type="binding site" evidence="5 10">
    <location>
        <position position="39"/>
    </location>
    <ligand>
        <name>NADP(+)</name>
        <dbReference type="ChEBI" id="CHEBI:58349"/>
    </ligand>
</feature>
<feature type="binding site" evidence="6 7 9 11">
    <location>
        <begin position="80"/>
        <end position="81"/>
    </location>
    <ligand>
        <name>NAD(+)</name>
        <dbReference type="ChEBI" id="CHEBI:57540"/>
    </ligand>
</feature>
<feature type="binding site" evidence="6 7 9 11">
    <location>
        <begin position="102"/>
        <end position="104"/>
    </location>
    <ligand>
        <name>NAD(+)</name>
        <dbReference type="ChEBI" id="CHEBI:57540"/>
    </ligand>
</feature>
<feature type="binding site" evidence="5 10">
    <location>
        <begin position="102"/>
        <end position="104"/>
    </location>
    <ligand>
        <name>NADP(+)</name>
        <dbReference type="ChEBI" id="CHEBI:58349"/>
    </ligand>
</feature>
<feature type="binding site" evidence="6 7 9 11">
    <location>
        <begin position="126"/>
        <end position="129"/>
    </location>
    <ligand>
        <name>NAD(+)</name>
        <dbReference type="ChEBI" id="CHEBI:57540"/>
    </ligand>
</feature>
<feature type="binding site" evidence="5 10">
    <location>
        <position position="129"/>
    </location>
    <ligand>
        <name>NADP(+)</name>
        <dbReference type="ChEBI" id="CHEBI:58349"/>
    </ligand>
</feature>
<feature type="binding site">
    <location>
        <position position="160"/>
    </location>
    <ligand>
        <name>(S)-2,3,4,5-tetrahydrodipicolinate</name>
        <dbReference type="ChEBI" id="CHEBI:16845"/>
    </ligand>
</feature>
<feature type="binding site" evidence="7 9">
    <location>
        <position position="163"/>
    </location>
    <ligand>
        <name>NAD(+)</name>
        <dbReference type="ChEBI" id="CHEBI:57540"/>
    </ligand>
</feature>
<feature type="binding site">
    <location>
        <begin position="169"/>
        <end position="170"/>
    </location>
    <ligand>
        <name>(S)-2,3,4,5-tetrahydrodipicolinate</name>
        <dbReference type="ChEBI" id="CHEBI:16845"/>
    </ligand>
</feature>
<feature type="binding site" evidence="5 10">
    <location>
        <position position="240"/>
    </location>
    <ligand>
        <name>NADP(+)</name>
        <dbReference type="ChEBI" id="CHEBI:58349"/>
    </ligand>
</feature>
<feature type="binding site" evidence="7 9">
    <location>
        <position position="243"/>
    </location>
    <ligand>
        <name>NAD(+)</name>
        <dbReference type="ChEBI" id="CHEBI:57540"/>
    </ligand>
</feature>
<feature type="mutagenesis site" description="135 to 200-fold reduction in catalytic activity." evidence="7">
    <original>H</original>
    <variation>A</variation>
    <variation>Q</variation>
    <location>
        <position position="159"/>
    </location>
</feature>
<feature type="mutagenesis site" description="625 to 830-fold reduction in catalytic activity." evidence="7">
    <original>K</original>
    <variation>A</variation>
    <variation>C</variation>
    <variation>Q</variation>
    <location>
        <position position="163"/>
    </location>
</feature>
<feature type="strand" evidence="14">
    <location>
        <begin position="5"/>
        <end position="10"/>
    </location>
</feature>
<feature type="turn" evidence="14">
    <location>
        <begin position="11"/>
        <end position="14"/>
    </location>
</feature>
<feature type="helix" evidence="14">
    <location>
        <begin position="16"/>
        <end position="27"/>
    </location>
</feature>
<feature type="strand" evidence="15">
    <location>
        <begin position="32"/>
        <end position="37"/>
    </location>
</feature>
<feature type="turn" evidence="15">
    <location>
        <begin position="44"/>
        <end position="47"/>
    </location>
</feature>
<feature type="strand" evidence="14">
    <location>
        <begin position="52"/>
        <end position="56"/>
    </location>
</feature>
<feature type="strand" evidence="14">
    <location>
        <begin position="62"/>
        <end position="64"/>
    </location>
</feature>
<feature type="turn" evidence="14">
    <location>
        <begin position="67"/>
        <end position="71"/>
    </location>
</feature>
<feature type="strand" evidence="14">
    <location>
        <begin position="74"/>
        <end position="78"/>
    </location>
</feature>
<feature type="helix" evidence="14">
    <location>
        <begin position="82"/>
        <end position="94"/>
    </location>
</feature>
<feature type="strand" evidence="14">
    <location>
        <begin position="98"/>
        <end position="101"/>
    </location>
</feature>
<feature type="helix" evidence="14">
    <location>
        <begin position="108"/>
        <end position="117"/>
    </location>
</feature>
<feature type="turn" evidence="14">
    <location>
        <begin position="118"/>
        <end position="120"/>
    </location>
</feature>
<feature type="strand" evidence="14">
    <location>
        <begin position="123"/>
        <end position="125"/>
    </location>
</feature>
<feature type="helix" evidence="14">
    <location>
        <begin position="131"/>
        <end position="147"/>
    </location>
</feature>
<feature type="turn" evidence="14">
    <location>
        <begin position="148"/>
        <end position="150"/>
    </location>
</feature>
<feature type="strand" evidence="14">
    <location>
        <begin position="151"/>
        <end position="159"/>
    </location>
</feature>
<feature type="strand" evidence="14">
    <location>
        <begin position="165"/>
        <end position="167"/>
    </location>
</feature>
<feature type="helix" evidence="14">
    <location>
        <begin position="169"/>
        <end position="181"/>
    </location>
</feature>
<feature type="helix" evidence="14">
    <location>
        <begin position="186"/>
        <end position="188"/>
    </location>
</feature>
<feature type="strand" evidence="14">
    <location>
        <begin position="206"/>
        <end position="212"/>
    </location>
</feature>
<feature type="strand" evidence="14">
    <location>
        <begin position="218"/>
        <end position="226"/>
    </location>
</feature>
<feature type="strand" evidence="14">
    <location>
        <begin position="229"/>
        <end position="237"/>
    </location>
</feature>
<feature type="helix" evidence="14">
    <location>
        <begin position="241"/>
        <end position="254"/>
    </location>
</feature>
<feature type="strand" evidence="14">
    <location>
        <begin position="259"/>
        <end position="262"/>
    </location>
</feature>
<feature type="helix" evidence="14">
    <location>
        <begin position="264"/>
        <end position="267"/>
    </location>
</feature>
<feature type="helix" evidence="14">
    <location>
        <begin position="270"/>
        <end position="272"/>
    </location>
</feature>